<keyword id="KW-0066">ATP synthesis</keyword>
<keyword id="KW-1003">Cell membrane</keyword>
<keyword id="KW-0139">CF(1)</keyword>
<keyword id="KW-0375">Hydrogen ion transport</keyword>
<keyword id="KW-0406">Ion transport</keyword>
<keyword id="KW-0472">Membrane</keyword>
<keyword id="KW-0813">Transport</keyword>
<sequence>MTKKEQALIEQYAKSLVEVASEHHSLDALQADVLAILETFVTTNLDQSLSSLAVPHAEKIKLLTLLKGNNSVYMNNFLNLILQNEREAYLYQMLQTVLNEIAIVSNQYDVTVTSSLPLTEEQKSRVRAVVAKKFAVTAGRLIEKVDPSLIGGFIISVNNKVIDTSIRRQLQAFKMNLK</sequence>
<proteinExistence type="inferred from homology"/>
<protein>
    <recommendedName>
        <fullName evidence="1">ATP synthase subunit delta</fullName>
    </recommendedName>
    <alternativeName>
        <fullName evidence="1">ATP synthase F(1) sector subunit delta</fullName>
    </alternativeName>
    <alternativeName>
        <fullName evidence="1">F-type ATPase subunit delta</fullName>
        <shortName evidence="1">F-ATPase subunit delta</shortName>
    </alternativeName>
</protein>
<dbReference type="EMBL" id="CP000003">
    <property type="protein sequence ID" value="AAT86730.1"/>
    <property type="molecule type" value="Genomic_DNA"/>
</dbReference>
<dbReference type="RefSeq" id="WP_002985240.1">
    <property type="nucleotide sequence ID" value="NC_006086.1"/>
</dbReference>
<dbReference type="SMR" id="Q5XCY3"/>
<dbReference type="KEGG" id="spa:M6_Spy0595"/>
<dbReference type="HOGENOM" id="CLU_085114_1_2_9"/>
<dbReference type="Proteomes" id="UP000001167">
    <property type="component" value="Chromosome"/>
</dbReference>
<dbReference type="GO" id="GO:0005886">
    <property type="term" value="C:plasma membrane"/>
    <property type="evidence" value="ECO:0007669"/>
    <property type="project" value="UniProtKB-SubCell"/>
</dbReference>
<dbReference type="GO" id="GO:0045259">
    <property type="term" value="C:proton-transporting ATP synthase complex"/>
    <property type="evidence" value="ECO:0007669"/>
    <property type="project" value="UniProtKB-KW"/>
</dbReference>
<dbReference type="GO" id="GO:0046933">
    <property type="term" value="F:proton-transporting ATP synthase activity, rotational mechanism"/>
    <property type="evidence" value="ECO:0007669"/>
    <property type="project" value="UniProtKB-UniRule"/>
</dbReference>
<dbReference type="Gene3D" id="1.10.520.20">
    <property type="entry name" value="N-terminal domain of the delta subunit of the F1F0-ATP synthase"/>
    <property type="match status" value="1"/>
</dbReference>
<dbReference type="HAMAP" id="MF_01416">
    <property type="entry name" value="ATP_synth_delta_bact"/>
    <property type="match status" value="1"/>
</dbReference>
<dbReference type="InterPro" id="IPR026015">
    <property type="entry name" value="ATP_synth_OSCP/delta_N_sf"/>
</dbReference>
<dbReference type="InterPro" id="IPR000711">
    <property type="entry name" value="ATPase_OSCP/dsu"/>
</dbReference>
<dbReference type="NCBIfam" id="TIGR01145">
    <property type="entry name" value="ATP_synt_delta"/>
    <property type="match status" value="1"/>
</dbReference>
<dbReference type="NCBIfam" id="NF004401">
    <property type="entry name" value="PRK05758.2-1"/>
    <property type="match status" value="1"/>
</dbReference>
<dbReference type="PANTHER" id="PTHR11910">
    <property type="entry name" value="ATP SYNTHASE DELTA CHAIN"/>
    <property type="match status" value="1"/>
</dbReference>
<dbReference type="Pfam" id="PF00213">
    <property type="entry name" value="OSCP"/>
    <property type="match status" value="1"/>
</dbReference>
<dbReference type="PRINTS" id="PR00125">
    <property type="entry name" value="ATPASEDELTA"/>
</dbReference>
<dbReference type="SUPFAM" id="SSF47928">
    <property type="entry name" value="N-terminal domain of the delta subunit of the F1F0-ATP synthase"/>
    <property type="match status" value="1"/>
</dbReference>
<accession>Q5XCY3</accession>
<evidence type="ECO:0000255" key="1">
    <source>
        <dbReference type="HAMAP-Rule" id="MF_01416"/>
    </source>
</evidence>
<feature type="chain" id="PRO_0000371166" description="ATP synthase subunit delta">
    <location>
        <begin position="1"/>
        <end position="178"/>
    </location>
</feature>
<name>ATPD_STRP6</name>
<reference key="1">
    <citation type="journal article" date="2004" name="J. Infect. Dis.">
        <title>Progress toward characterization of the group A Streptococcus metagenome: complete genome sequence of a macrolide-resistant serotype M6 strain.</title>
        <authorList>
            <person name="Banks D.J."/>
            <person name="Porcella S.F."/>
            <person name="Barbian K.D."/>
            <person name="Beres S.B."/>
            <person name="Philips L.E."/>
            <person name="Voyich J.M."/>
            <person name="DeLeo F.R."/>
            <person name="Martin J.M."/>
            <person name="Somerville G.A."/>
            <person name="Musser J.M."/>
        </authorList>
    </citation>
    <scope>NUCLEOTIDE SEQUENCE [LARGE SCALE GENOMIC DNA]</scope>
    <source>
        <strain>ATCC BAA-946 / MGAS10394</strain>
    </source>
</reference>
<organism>
    <name type="scientific">Streptococcus pyogenes serotype M6 (strain ATCC BAA-946 / MGAS10394)</name>
    <dbReference type="NCBI Taxonomy" id="286636"/>
    <lineage>
        <taxon>Bacteria</taxon>
        <taxon>Bacillati</taxon>
        <taxon>Bacillota</taxon>
        <taxon>Bacilli</taxon>
        <taxon>Lactobacillales</taxon>
        <taxon>Streptococcaceae</taxon>
        <taxon>Streptococcus</taxon>
    </lineage>
</organism>
<comment type="function">
    <text evidence="1">F(1)F(0) ATP synthase produces ATP from ADP in the presence of a proton or sodium gradient. F-type ATPases consist of two structural domains, F(1) containing the extramembraneous catalytic core and F(0) containing the membrane proton channel, linked together by a central stalk and a peripheral stalk. During catalysis, ATP synthesis in the catalytic domain of F(1) is coupled via a rotary mechanism of the central stalk subunits to proton translocation.</text>
</comment>
<comment type="function">
    <text evidence="1">This protein is part of the stalk that links CF(0) to CF(1). It either transmits conformational changes from CF(0) to CF(1) or is implicated in proton conduction.</text>
</comment>
<comment type="subunit">
    <text evidence="1">F-type ATPases have 2 components, F(1) - the catalytic core - and F(0) - the membrane proton channel. F(1) has five subunits: alpha(3), beta(3), gamma(1), delta(1), epsilon(1). F(0) has three main subunits: a(1), b(2) and c(10-14). The alpha and beta chains form an alternating ring which encloses part of the gamma chain. F(1) is attached to F(0) by a central stalk formed by the gamma and epsilon chains, while a peripheral stalk is formed by the delta and b chains.</text>
</comment>
<comment type="subcellular location">
    <subcellularLocation>
        <location evidence="1">Cell membrane</location>
        <topology evidence="1">Peripheral membrane protein</topology>
    </subcellularLocation>
</comment>
<comment type="similarity">
    <text evidence="1">Belongs to the ATPase delta chain family.</text>
</comment>
<gene>
    <name evidence="1" type="primary">atpH</name>
    <name type="ordered locus">M6_Spy0595</name>
</gene>